<sequence length="218" mass="24646">MSVQTYLVAYNVLQILGWSAILVKTVLGLANGLTWPQLYESVEFELKIFQTAAILEVIHAIVGLVRSPVGTTAMQVTSRVVLVWPILHLCSTARFSIGVPLLLVAWSVTEVIRYSFYALSVLKQPIPYFLLYLRYTLFYVLYPMGVSGELLTLFASLNEVDEKKILTLEMPNRLNMGISFWWVLIIAALSYIPGFPQLYFYMIGQRKKILGGGSKKKQ</sequence>
<keyword id="KW-0275">Fatty acid biosynthesis</keyword>
<keyword id="KW-0276">Fatty acid metabolism</keyword>
<keyword id="KW-0444">Lipid biosynthesis</keyword>
<keyword id="KW-0443">Lipid metabolism</keyword>
<keyword id="KW-0456">Lyase</keyword>
<keyword id="KW-0472">Membrane</keyword>
<keyword id="KW-1185">Reference proteome</keyword>
<keyword id="KW-0812">Transmembrane</keyword>
<keyword id="KW-1133">Transmembrane helix</keyword>
<accession>O17040</accession>
<feature type="chain" id="PRO_0000421280" description="Very-long-chain (3R)-3-hydroxyacyl-CoA dehydratase hpo-8">
    <location>
        <begin position="1"/>
        <end position="218"/>
    </location>
</feature>
<feature type="transmembrane region" description="Helical" evidence="2">
    <location>
        <begin position="15"/>
        <end position="35"/>
    </location>
</feature>
<feature type="transmembrane region" description="Helical" evidence="2">
    <location>
        <begin position="44"/>
        <end position="64"/>
    </location>
</feature>
<feature type="transmembrane region" description="Helical" evidence="2">
    <location>
        <begin position="86"/>
        <end position="106"/>
    </location>
</feature>
<feature type="transmembrane region" description="Helical" evidence="2">
    <location>
        <begin position="137"/>
        <end position="157"/>
    </location>
</feature>
<feature type="transmembrane region" description="Helical" evidence="2">
    <location>
        <begin position="176"/>
        <end position="196"/>
    </location>
</feature>
<feature type="active site" evidence="1">
    <location>
        <position position="142"/>
    </location>
</feature>
<feature type="active site" evidence="1">
    <location>
        <position position="149"/>
    </location>
</feature>
<name>HACD_CAEEL</name>
<proteinExistence type="inferred from homology"/>
<reference key="1">
    <citation type="journal article" date="1998" name="Science">
        <title>Genome sequence of the nematode C. elegans: a platform for investigating biology.</title>
        <authorList>
            <consortium name="The C. elegans sequencing consortium"/>
        </authorList>
    </citation>
    <scope>NUCLEOTIDE SEQUENCE [LARGE SCALE GENOMIC DNA]</scope>
    <source>
        <strain>Bristol N2</strain>
    </source>
</reference>
<gene>
    <name type="primary">hpo-8</name>
    <name type="ORF">T15B7.2</name>
</gene>
<dbReference type="EC" id="4.2.1.134" evidence="1"/>
<dbReference type="EMBL" id="FO080967">
    <property type="protein sequence ID" value="CCD68156.1"/>
    <property type="molecule type" value="Genomic_DNA"/>
</dbReference>
<dbReference type="PIR" id="T32252">
    <property type="entry name" value="T32252"/>
</dbReference>
<dbReference type="RefSeq" id="NP_504740.2">
    <property type="nucleotide sequence ID" value="NM_072339.5"/>
</dbReference>
<dbReference type="BioGRID" id="53176">
    <property type="interactions" value="4"/>
</dbReference>
<dbReference type="FunCoup" id="O17040">
    <property type="interactions" value="2254"/>
</dbReference>
<dbReference type="STRING" id="6239.T15B7.2.2"/>
<dbReference type="PaxDb" id="6239-T15B7.2.2"/>
<dbReference type="PeptideAtlas" id="O17040"/>
<dbReference type="EnsemblMetazoa" id="T15B7.2.1">
    <property type="protein sequence ID" value="T15B7.2.1"/>
    <property type="gene ID" value="WBGene00020517"/>
</dbReference>
<dbReference type="GeneID" id="188513"/>
<dbReference type="KEGG" id="cel:CELE_T15B7.2"/>
<dbReference type="UCSC" id="T15B7.2.1">
    <property type="organism name" value="c. elegans"/>
</dbReference>
<dbReference type="AGR" id="WB:WBGene00020517"/>
<dbReference type="CTD" id="188513"/>
<dbReference type="WormBase" id="T15B7.2">
    <property type="protein sequence ID" value="CE33319"/>
    <property type="gene ID" value="WBGene00020517"/>
    <property type="gene designation" value="hpo-8"/>
</dbReference>
<dbReference type="eggNOG" id="KOG3187">
    <property type="taxonomic scope" value="Eukaryota"/>
</dbReference>
<dbReference type="GeneTree" id="ENSGT00530000062962"/>
<dbReference type="HOGENOM" id="CLU_034302_2_2_1"/>
<dbReference type="InParanoid" id="O17040"/>
<dbReference type="OMA" id="SEWWLMY"/>
<dbReference type="OrthoDB" id="46988at2759"/>
<dbReference type="PhylomeDB" id="O17040"/>
<dbReference type="Reactome" id="R-CEL-75876">
    <property type="pathway name" value="Synthesis of very long-chain fatty acyl-CoAs"/>
</dbReference>
<dbReference type="UniPathway" id="UPA00094"/>
<dbReference type="PRO" id="PR:O17040"/>
<dbReference type="Proteomes" id="UP000001940">
    <property type="component" value="Chromosome V"/>
</dbReference>
<dbReference type="Bgee" id="WBGene00020517">
    <property type="expression patterns" value="Expressed in larva and 4 other cell types or tissues"/>
</dbReference>
<dbReference type="GO" id="GO:0005789">
    <property type="term" value="C:endoplasmic reticulum membrane"/>
    <property type="evidence" value="ECO:0000318"/>
    <property type="project" value="GO_Central"/>
</dbReference>
<dbReference type="GO" id="GO:0018812">
    <property type="term" value="F:3-hydroxyacyl-CoA dehydratase activity"/>
    <property type="evidence" value="ECO:0000318"/>
    <property type="project" value="GO_Central"/>
</dbReference>
<dbReference type="GO" id="GO:0102158">
    <property type="term" value="F:very-long-chain (3R)-3-hydroxyacyl-CoA dehydratase activity"/>
    <property type="evidence" value="ECO:0007669"/>
    <property type="project" value="UniProtKB-EC"/>
</dbReference>
<dbReference type="GO" id="GO:0030497">
    <property type="term" value="P:fatty acid elongation"/>
    <property type="evidence" value="ECO:0000318"/>
    <property type="project" value="GO_Central"/>
</dbReference>
<dbReference type="GO" id="GO:0030148">
    <property type="term" value="P:sphingolipid biosynthetic process"/>
    <property type="evidence" value="ECO:0000318"/>
    <property type="project" value="GO_Central"/>
</dbReference>
<dbReference type="GO" id="GO:0042761">
    <property type="term" value="P:very long-chain fatty acid biosynthetic process"/>
    <property type="evidence" value="ECO:0000318"/>
    <property type="project" value="GO_Central"/>
</dbReference>
<dbReference type="InterPro" id="IPR007482">
    <property type="entry name" value="Tyr_Pase-like_PTPLA"/>
</dbReference>
<dbReference type="PANTHER" id="PTHR11035">
    <property type="entry name" value="VERY-LONG-CHAIN (3R)-3-HYDROXYACYL-COA DEHYDRATASE"/>
    <property type="match status" value="1"/>
</dbReference>
<dbReference type="PANTHER" id="PTHR11035:SF3">
    <property type="entry name" value="VERY-LONG-CHAIN (3R)-3-HYDROXYACYL-COA DEHYDRATASE"/>
    <property type="match status" value="1"/>
</dbReference>
<dbReference type="Pfam" id="PF04387">
    <property type="entry name" value="PTPLA"/>
    <property type="match status" value="1"/>
</dbReference>
<comment type="function">
    <text evidence="1">Catalyzes the third of the four reactions of the long-chain fatty acids elongation cycle. This endoplasmic reticulum-bound enzymatic process, allows the addition of two carbons to the chain of long- and very long-chain fatty acids/VLCFAs per cycle. This enzyme catalyzes the dehydration of the 3-hydroxyacyl-CoA intermediate into trans-2,3-enoyl-CoA, within each cycle of fatty acid elongation. Thereby, it participates in the production of VLCFAs of different chain lengths that are involved in multiple biological processes as precursors of membrane lipids and lipid mediators.</text>
</comment>
<comment type="catalytic activity">
    <reaction evidence="1">
        <text>a very-long-chain (3R)-3-hydroxyacyl-CoA = a very-long-chain (2E)-enoyl-CoA + H2O</text>
        <dbReference type="Rhea" id="RHEA:45812"/>
        <dbReference type="ChEBI" id="CHEBI:15377"/>
        <dbReference type="ChEBI" id="CHEBI:83728"/>
        <dbReference type="ChEBI" id="CHEBI:85440"/>
        <dbReference type="EC" id="4.2.1.134"/>
    </reaction>
</comment>
<comment type="pathway">
    <text evidence="1">Lipid metabolism; fatty acid biosynthesis.</text>
</comment>
<comment type="subcellular location">
    <subcellularLocation>
        <location evidence="3">Membrane</location>
        <topology evidence="3">Multi-pass membrane protein</topology>
    </subcellularLocation>
</comment>
<comment type="similarity">
    <text evidence="3">Belongs to the very long-chain fatty acids dehydratase HACD family.</text>
</comment>
<evidence type="ECO:0000250" key="1">
    <source>
        <dbReference type="UniProtKB" id="P40857"/>
    </source>
</evidence>
<evidence type="ECO:0000255" key="2"/>
<evidence type="ECO:0000305" key="3"/>
<organism>
    <name type="scientific">Caenorhabditis elegans</name>
    <dbReference type="NCBI Taxonomy" id="6239"/>
    <lineage>
        <taxon>Eukaryota</taxon>
        <taxon>Metazoa</taxon>
        <taxon>Ecdysozoa</taxon>
        <taxon>Nematoda</taxon>
        <taxon>Chromadorea</taxon>
        <taxon>Rhabditida</taxon>
        <taxon>Rhabditina</taxon>
        <taxon>Rhabditomorpha</taxon>
        <taxon>Rhabditoidea</taxon>
        <taxon>Rhabditidae</taxon>
        <taxon>Peloderinae</taxon>
        <taxon>Caenorhabditis</taxon>
    </lineage>
</organism>
<protein>
    <recommendedName>
        <fullName evidence="3">Very-long-chain (3R)-3-hydroxyacyl-CoA dehydratase hpo-8</fullName>
        <ecNumber evidence="1">4.2.1.134</ecNumber>
    </recommendedName>
    <alternativeName>
        <fullName evidence="3">Probable 3-hydroxyacyl-CoA dehydratase</fullName>
    </alternativeName>
</protein>